<sequence>MKVLVLNAGSSSQKSCLYDLPHTQLPQEPPQPLWEAQIDWPHGGDGAKLKIKTVHHRHEKTLQGGSRSEDSARMLETLYSGETRVIADPSEIEMVGHRVVHGGEAYRESTRITPEVKAAIDQLARFAPVHNPANLAGIEALEALLGPQVPQIAVFDTAFHSRLPAAAYVYPGPYEWLDQGIRRYGFHGISHRYCAERAAQILGRDLAQLRLITCHLGNGCSLAAVQGGFSIDTTMGFTPLEGLMMGSRSGSVDPGILIHLMRQADYTVDKLDHILNQASGLEGVSGISNDLRPLFKAIDEGNARAKLALDIYIHRLRAGIGAMAVSLGGLDALIFTAGVGENAAPVRAGACEALGFLGVALDPQKNNGRPRDADIAAADSAVRVLVIHTQEDWAIARECWQHLRR</sequence>
<name>ACKA_GLOVI</name>
<keyword id="KW-0067">ATP-binding</keyword>
<keyword id="KW-0963">Cytoplasm</keyword>
<keyword id="KW-0418">Kinase</keyword>
<keyword id="KW-0460">Magnesium</keyword>
<keyword id="KW-0479">Metal-binding</keyword>
<keyword id="KW-0547">Nucleotide-binding</keyword>
<keyword id="KW-1185">Reference proteome</keyword>
<keyword id="KW-0808">Transferase</keyword>
<gene>
    <name evidence="1" type="primary">ackA</name>
    <name type="ordered locus">glr1000</name>
</gene>
<dbReference type="EC" id="2.7.2.1" evidence="1"/>
<dbReference type="EMBL" id="BA000045">
    <property type="protein sequence ID" value="BAC88941.1"/>
    <property type="molecule type" value="Genomic_DNA"/>
</dbReference>
<dbReference type="RefSeq" id="NP_923946.1">
    <property type="nucleotide sequence ID" value="NC_005125.1"/>
</dbReference>
<dbReference type="RefSeq" id="WP_011141002.1">
    <property type="nucleotide sequence ID" value="NC_005125.1"/>
</dbReference>
<dbReference type="SMR" id="Q7NLW9"/>
<dbReference type="FunCoup" id="Q7NLW9">
    <property type="interactions" value="97"/>
</dbReference>
<dbReference type="STRING" id="251221.gene:10758478"/>
<dbReference type="EnsemblBacteria" id="BAC88941">
    <property type="protein sequence ID" value="BAC88941"/>
    <property type="gene ID" value="BAC88941"/>
</dbReference>
<dbReference type="KEGG" id="gvi:glr1000"/>
<dbReference type="PATRIC" id="fig|251221.4.peg.1023"/>
<dbReference type="eggNOG" id="COG0282">
    <property type="taxonomic scope" value="Bacteria"/>
</dbReference>
<dbReference type="HOGENOM" id="CLU_020352_0_1_3"/>
<dbReference type="InParanoid" id="Q7NLW9"/>
<dbReference type="OrthoDB" id="9802453at2"/>
<dbReference type="PhylomeDB" id="Q7NLW9"/>
<dbReference type="UniPathway" id="UPA00340">
    <property type="reaction ID" value="UER00458"/>
</dbReference>
<dbReference type="Proteomes" id="UP000000557">
    <property type="component" value="Chromosome"/>
</dbReference>
<dbReference type="GO" id="GO:0005737">
    <property type="term" value="C:cytoplasm"/>
    <property type="evidence" value="ECO:0007669"/>
    <property type="project" value="UniProtKB-SubCell"/>
</dbReference>
<dbReference type="GO" id="GO:0008776">
    <property type="term" value="F:acetate kinase activity"/>
    <property type="evidence" value="ECO:0000318"/>
    <property type="project" value="GO_Central"/>
</dbReference>
<dbReference type="GO" id="GO:0005524">
    <property type="term" value="F:ATP binding"/>
    <property type="evidence" value="ECO:0007669"/>
    <property type="project" value="UniProtKB-KW"/>
</dbReference>
<dbReference type="GO" id="GO:0000287">
    <property type="term" value="F:magnesium ion binding"/>
    <property type="evidence" value="ECO:0007669"/>
    <property type="project" value="UniProtKB-UniRule"/>
</dbReference>
<dbReference type="GO" id="GO:0006083">
    <property type="term" value="P:acetate metabolic process"/>
    <property type="evidence" value="ECO:0000318"/>
    <property type="project" value="GO_Central"/>
</dbReference>
<dbReference type="GO" id="GO:0006085">
    <property type="term" value="P:acetyl-CoA biosynthetic process"/>
    <property type="evidence" value="ECO:0007669"/>
    <property type="project" value="UniProtKB-UniRule"/>
</dbReference>
<dbReference type="CDD" id="cd24010">
    <property type="entry name" value="ASKHA_NBD_AcK_PK"/>
    <property type="match status" value="1"/>
</dbReference>
<dbReference type="Gene3D" id="3.30.420.40">
    <property type="match status" value="2"/>
</dbReference>
<dbReference type="HAMAP" id="MF_00020">
    <property type="entry name" value="Acetate_kinase"/>
    <property type="match status" value="1"/>
</dbReference>
<dbReference type="InterPro" id="IPR004372">
    <property type="entry name" value="Ac/propionate_kinase"/>
</dbReference>
<dbReference type="InterPro" id="IPR000890">
    <property type="entry name" value="Aliphatic_acid_kin_short-chain"/>
</dbReference>
<dbReference type="InterPro" id="IPR023865">
    <property type="entry name" value="Aliphatic_acid_kinase_CS"/>
</dbReference>
<dbReference type="InterPro" id="IPR043129">
    <property type="entry name" value="ATPase_NBD"/>
</dbReference>
<dbReference type="NCBIfam" id="TIGR00016">
    <property type="entry name" value="ackA"/>
    <property type="match status" value="1"/>
</dbReference>
<dbReference type="PANTHER" id="PTHR21060">
    <property type="entry name" value="ACETATE KINASE"/>
    <property type="match status" value="1"/>
</dbReference>
<dbReference type="PANTHER" id="PTHR21060:SF15">
    <property type="entry name" value="ACETATE KINASE-RELATED"/>
    <property type="match status" value="1"/>
</dbReference>
<dbReference type="Pfam" id="PF00871">
    <property type="entry name" value="Acetate_kinase"/>
    <property type="match status" value="1"/>
</dbReference>
<dbReference type="PIRSF" id="PIRSF000722">
    <property type="entry name" value="Acetate_prop_kin"/>
    <property type="match status" value="1"/>
</dbReference>
<dbReference type="PRINTS" id="PR00471">
    <property type="entry name" value="ACETATEKNASE"/>
</dbReference>
<dbReference type="SUPFAM" id="SSF53067">
    <property type="entry name" value="Actin-like ATPase domain"/>
    <property type="match status" value="2"/>
</dbReference>
<dbReference type="PROSITE" id="PS01075">
    <property type="entry name" value="ACETATE_KINASE_1"/>
    <property type="match status" value="1"/>
</dbReference>
<dbReference type="PROSITE" id="PS01076">
    <property type="entry name" value="ACETATE_KINASE_2"/>
    <property type="match status" value="1"/>
</dbReference>
<comment type="function">
    <text evidence="1">Catalyzes the formation of acetyl phosphate from acetate and ATP. Can also catalyze the reverse reaction.</text>
</comment>
<comment type="catalytic activity">
    <reaction evidence="1">
        <text>acetate + ATP = acetyl phosphate + ADP</text>
        <dbReference type="Rhea" id="RHEA:11352"/>
        <dbReference type="ChEBI" id="CHEBI:22191"/>
        <dbReference type="ChEBI" id="CHEBI:30089"/>
        <dbReference type="ChEBI" id="CHEBI:30616"/>
        <dbReference type="ChEBI" id="CHEBI:456216"/>
        <dbReference type="EC" id="2.7.2.1"/>
    </reaction>
</comment>
<comment type="cofactor">
    <cofactor evidence="1">
        <name>Mg(2+)</name>
        <dbReference type="ChEBI" id="CHEBI:18420"/>
    </cofactor>
    <cofactor evidence="1">
        <name>Mn(2+)</name>
        <dbReference type="ChEBI" id="CHEBI:29035"/>
    </cofactor>
    <text evidence="1">Mg(2+). Can also accept Mn(2+).</text>
</comment>
<comment type="pathway">
    <text evidence="1">Metabolic intermediate biosynthesis; acetyl-CoA biosynthesis; acetyl-CoA from acetate: step 1/2.</text>
</comment>
<comment type="subunit">
    <text evidence="1">Homodimer.</text>
</comment>
<comment type="subcellular location">
    <subcellularLocation>
        <location evidence="1">Cytoplasm</location>
    </subcellularLocation>
</comment>
<comment type="similarity">
    <text evidence="1">Belongs to the acetokinase family.</text>
</comment>
<accession>Q7NLW9</accession>
<reference key="1">
    <citation type="journal article" date="2003" name="DNA Res.">
        <title>Complete genome structure of Gloeobacter violaceus PCC 7421, a cyanobacterium that lacks thylakoids.</title>
        <authorList>
            <person name="Nakamura Y."/>
            <person name="Kaneko T."/>
            <person name="Sato S."/>
            <person name="Mimuro M."/>
            <person name="Miyashita H."/>
            <person name="Tsuchiya T."/>
            <person name="Sasamoto S."/>
            <person name="Watanabe A."/>
            <person name="Kawashima K."/>
            <person name="Kishida Y."/>
            <person name="Kiyokawa C."/>
            <person name="Kohara M."/>
            <person name="Matsumoto M."/>
            <person name="Matsuno A."/>
            <person name="Nakazaki N."/>
            <person name="Shimpo S."/>
            <person name="Takeuchi C."/>
            <person name="Yamada M."/>
            <person name="Tabata S."/>
        </authorList>
    </citation>
    <scope>NUCLEOTIDE SEQUENCE [LARGE SCALE GENOMIC DNA]</scope>
    <source>
        <strain>ATCC 29082 / PCC 7421</strain>
    </source>
</reference>
<evidence type="ECO:0000255" key="1">
    <source>
        <dbReference type="HAMAP-Rule" id="MF_00020"/>
    </source>
</evidence>
<proteinExistence type="inferred from homology"/>
<protein>
    <recommendedName>
        <fullName evidence="1">Acetate kinase</fullName>
        <ecNumber evidence="1">2.7.2.1</ecNumber>
    </recommendedName>
    <alternativeName>
        <fullName evidence="1">Acetokinase</fullName>
    </alternativeName>
</protein>
<feature type="chain" id="PRO_1000089977" description="Acetate kinase">
    <location>
        <begin position="1"/>
        <end position="405"/>
    </location>
</feature>
<feature type="active site" description="Proton donor/acceptor" evidence="1">
    <location>
        <position position="156"/>
    </location>
</feature>
<feature type="binding site" evidence="1">
    <location>
        <position position="7"/>
    </location>
    <ligand>
        <name>Mg(2+)</name>
        <dbReference type="ChEBI" id="CHEBI:18420"/>
    </ligand>
</feature>
<feature type="binding site" evidence="1">
    <location>
        <position position="14"/>
    </location>
    <ligand>
        <name>ATP</name>
        <dbReference type="ChEBI" id="CHEBI:30616"/>
    </ligand>
</feature>
<feature type="binding site" evidence="1">
    <location>
        <position position="98"/>
    </location>
    <ligand>
        <name>substrate</name>
    </ligand>
</feature>
<feature type="binding site" evidence="1">
    <location>
        <begin position="215"/>
        <end position="219"/>
    </location>
    <ligand>
        <name>ATP</name>
        <dbReference type="ChEBI" id="CHEBI:30616"/>
    </ligand>
</feature>
<feature type="binding site" evidence="1">
    <location>
        <begin position="290"/>
        <end position="292"/>
    </location>
    <ligand>
        <name>ATP</name>
        <dbReference type="ChEBI" id="CHEBI:30616"/>
    </ligand>
</feature>
<feature type="binding site" evidence="1">
    <location>
        <begin position="338"/>
        <end position="342"/>
    </location>
    <ligand>
        <name>ATP</name>
        <dbReference type="ChEBI" id="CHEBI:30616"/>
    </ligand>
</feature>
<feature type="binding site" evidence="1">
    <location>
        <position position="391"/>
    </location>
    <ligand>
        <name>Mg(2+)</name>
        <dbReference type="ChEBI" id="CHEBI:18420"/>
    </ligand>
</feature>
<feature type="site" description="Transition state stabilizer" evidence="1">
    <location>
        <position position="187"/>
    </location>
</feature>
<feature type="site" description="Transition state stabilizer" evidence="1">
    <location>
        <position position="248"/>
    </location>
</feature>
<organism>
    <name type="scientific">Gloeobacter violaceus (strain ATCC 29082 / PCC 7421)</name>
    <dbReference type="NCBI Taxonomy" id="251221"/>
    <lineage>
        <taxon>Bacteria</taxon>
        <taxon>Bacillati</taxon>
        <taxon>Cyanobacteriota</taxon>
        <taxon>Cyanophyceae</taxon>
        <taxon>Gloeobacterales</taxon>
        <taxon>Gloeobacteraceae</taxon>
        <taxon>Gloeobacter</taxon>
    </lineage>
</organism>